<proteinExistence type="inferred from homology"/>
<feature type="chain" id="PRO_1000073041" description="DNA/RNA-binding protein Alba">
    <location>
        <begin position="1"/>
        <end position="89"/>
    </location>
</feature>
<comment type="function">
    <text evidence="1">Binds double-stranded DNA tightly but without sequence specificity. Involved in DNA compaction.</text>
</comment>
<comment type="subcellular location">
    <subcellularLocation>
        <location evidence="1">Cytoplasm</location>
    </subcellularLocation>
    <subcellularLocation>
        <location evidence="1">Chromosome</location>
    </subcellularLocation>
</comment>
<comment type="similarity">
    <text evidence="1">Belongs to the histone-like Alba family.</text>
</comment>
<sequence length="89" mass="9668">MAEDDVVFVGNKPVMNYVLAVVTQFNSGAKEVRIMARGRAISRAVDVAEVSRSRFLGDVVVKDIKISTETLNTDRGETNVSAIEIVLGK</sequence>
<reference key="1">
    <citation type="submission" date="2006-10" db="EMBL/GenBank/DDBJ databases">
        <title>Complete sequence of Methanosaeta thermophila PT.</title>
        <authorList>
            <consortium name="US DOE Joint Genome Institute"/>
            <person name="Copeland A."/>
            <person name="Lucas S."/>
            <person name="Lapidus A."/>
            <person name="Barry K."/>
            <person name="Detter J.C."/>
            <person name="Glavina del Rio T."/>
            <person name="Hammon N."/>
            <person name="Israni S."/>
            <person name="Pitluck S."/>
            <person name="Chain P."/>
            <person name="Malfatti S."/>
            <person name="Shin M."/>
            <person name="Vergez L."/>
            <person name="Schmutz J."/>
            <person name="Larimer F."/>
            <person name="Land M."/>
            <person name="Hauser L."/>
            <person name="Kyrpides N."/>
            <person name="Kim E."/>
            <person name="Smith K.S."/>
            <person name="Ingram-Smith C."/>
            <person name="Richardson P."/>
        </authorList>
    </citation>
    <scope>NUCLEOTIDE SEQUENCE [LARGE SCALE GENOMIC DNA]</scope>
    <source>
        <strain>DSM 6194 / JCM 14653 / NBRC 101360 / PT</strain>
    </source>
</reference>
<protein>
    <recommendedName>
        <fullName evidence="1">DNA/RNA-binding protein Alba</fullName>
    </recommendedName>
</protein>
<organism>
    <name type="scientific">Methanothrix thermoacetophila (strain DSM 6194 / JCM 14653 / NBRC 101360 / PT)</name>
    <name type="common">Methanosaeta thermophila</name>
    <dbReference type="NCBI Taxonomy" id="349307"/>
    <lineage>
        <taxon>Archaea</taxon>
        <taxon>Methanobacteriati</taxon>
        <taxon>Methanobacteriota</taxon>
        <taxon>Stenosarchaea group</taxon>
        <taxon>Methanomicrobia</taxon>
        <taxon>Methanotrichales</taxon>
        <taxon>Methanotrichaceae</taxon>
        <taxon>Methanothrix</taxon>
    </lineage>
</organism>
<keyword id="KW-0158">Chromosome</keyword>
<keyword id="KW-0963">Cytoplasm</keyword>
<keyword id="KW-0226">DNA condensation</keyword>
<keyword id="KW-0238">DNA-binding</keyword>
<keyword id="KW-1185">Reference proteome</keyword>
<gene>
    <name evidence="1" type="primary">albA</name>
    <name type="ordered locus">Mthe_1656</name>
</gene>
<dbReference type="EMBL" id="CP000477">
    <property type="protein sequence ID" value="ABK15422.1"/>
    <property type="molecule type" value="Genomic_DNA"/>
</dbReference>
<dbReference type="RefSeq" id="WP_011696800.1">
    <property type="nucleotide sequence ID" value="NC_008553.1"/>
</dbReference>
<dbReference type="SMR" id="A0B9P8"/>
<dbReference type="STRING" id="349307.Mthe_1656"/>
<dbReference type="GeneID" id="4462651"/>
<dbReference type="KEGG" id="mtp:Mthe_1656"/>
<dbReference type="HOGENOM" id="CLU_110989_1_0_2"/>
<dbReference type="OrthoDB" id="10360at2157"/>
<dbReference type="Proteomes" id="UP000000674">
    <property type="component" value="Chromosome"/>
</dbReference>
<dbReference type="GO" id="GO:0005694">
    <property type="term" value="C:chromosome"/>
    <property type="evidence" value="ECO:0007669"/>
    <property type="project" value="UniProtKB-SubCell"/>
</dbReference>
<dbReference type="GO" id="GO:0005737">
    <property type="term" value="C:cytoplasm"/>
    <property type="evidence" value="ECO:0007669"/>
    <property type="project" value="UniProtKB-SubCell"/>
</dbReference>
<dbReference type="GO" id="GO:0003690">
    <property type="term" value="F:double-stranded DNA binding"/>
    <property type="evidence" value="ECO:0007669"/>
    <property type="project" value="UniProtKB-UniRule"/>
</dbReference>
<dbReference type="GO" id="GO:0003723">
    <property type="term" value="F:RNA binding"/>
    <property type="evidence" value="ECO:0007669"/>
    <property type="project" value="InterPro"/>
</dbReference>
<dbReference type="GO" id="GO:0030261">
    <property type="term" value="P:chromosome condensation"/>
    <property type="evidence" value="ECO:0007669"/>
    <property type="project" value="UniProtKB-KW"/>
</dbReference>
<dbReference type="Gene3D" id="3.30.110.20">
    <property type="entry name" value="Alba-like domain"/>
    <property type="match status" value="1"/>
</dbReference>
<dbReference type="HAMAP" id="MF_01122">
    <property type="entry name" value="AlbA"/>
    <property type="match status" value="1"/>
</dbReference>
<dbReference type="InterPro" id="IPR036882">
    <property type="entry name" value="Alba-like_dom_sf"/>
</dbReference>
<dbReference type="InterPro" id="IPR013795">
    <property type="entry name" value="DNA/RNA-bd_Alba"/>
</dbReference>
<dbReference type="InterPro" id="IPR002775">
    <property type="entry name" value="DNA/RNA-bd_Alba-like"/>
</dbReference>
<dbReference type="NCBIfam" id="TIGR00285">
    <property type="entry name" value="DNA-binding protein Alba"/>
    <property type="match status" value="1"/>
</dbReference>
<dbReference type="NCBIfam" id="NF003088">
    <property type="entry name" value="PRK04015.1"/>
    <property type="match status" value="1"/>
</dbReference>
<dbReference type="Pfam" id="PF01918">
    <property type="entry name" value="Alba"/>
    <property type="match status" value="1"/>
</dbReference>
<dbReference type="PIRSF" id="PIRSF028732">
    <property type="entry name" value="Alba"/>
    <property type="match status" value="1"/>
</dbReference>
<dbReference type="SUPFAM" id="SSF82704">
    <property type="entry name" value="AlbA-like"/>
    <property type="match status" value="1"/>
</dbReference>
<accession>A0B9P8</accession>
<name>ALBA_METTP</name>
<evidence type="ECO:0000255" key="1">
    <source>
        <dbReference type="HAMAP-Rule" id="MF_01122"/>
    </source>
</evidence>